<protein>
    <recommendedName>
        <fullName evidence="1">Isoleucine--tRNA ligase</fullName>
        <ecNumber evidence="1">6.1.1.5</ecNumber>
    </recommendedName>
    <alternativeName>
        <fullName evidence="1">Isoleucyl-tRNA synthetase</fullName>
        <shortName evidence="1">IleRS</shortName>
    </alternativeName>
</protein>
<name>SYI_PARUW</name>
<accession>Q6MDY1</accession>
<reference key="1">
    <citation type="journal article" date="2004" name="Science">
        <title>Illuminating the evolutionary history of chlamydiae.</title>
        <authorList>
            <person name="Horn M."/>
            <person name="Collingro A."/>
            <person name="Schmitz-Esser S."/>
            <person name="Beier C.L."/>
            <person name="Purkhold U."/>
            <person name="Fartmann B."/>
            <person name="Brandt P."/>
            <person name="Nyakatura G.J."/>
            <person name="Droege M."/>
            <person name="Frishman D."/>
            <person name="Rattei T."/>
            <person name="Mewes H.-W."/>
            <person name="Wagner M."/>
        </authorList>
    </citation>
    <scope>NUCLEOTIDE SEQUENCE [LARGE SCALE GENOMIC DNA]</scope>
    <source>
        <strain>UWE25</strain>
    </source>
</reference>
<gene>
    <name evidence="1" type="primary">ileS</name>
    <name type="ordered locus">pc0494</name>
</gene>
<dbReference type="EC" id="6.1.1.5" evidence="1"/>
<dbReference type="EMBL" id="BX908798">
    <property type="protein sequence ID" value="CAF23218.1"/>
    <property type="molecule type" value="Genomic_DNA"/>
</dbReference>
<dbReference type="RefSeq" id="WP_011175044.1">
    <property type="nucleotide sequence ID" value="NC_005861.2"/>
</dbReference>
<dbReference type="SMR" id="Q6MDY1"/>
<dbReference type="STRING" id="264201.pc0494"/>
<dbReference type="KEGG" id="pcu:PC_RS02405"/>
<dbReference type="eggNOG" id="COG0060">
    <property type="taxonomic scope" value="Bacteria"/>
</dbReference>
<dbReference type="HOGENOM" id="CLU_001493_1_1_0"/>
<dbReference type="OrthoDB" id="9810365at2"/>
<dbReference type="Proteomes" id="UP000000529">
    <property type="component" value="Chromosome"/>
</dbReference>
<dbReference type="GO" id="GO:0005737">
    <property type="term" value="C:cytoplasm"/>
    <property type="evidence" value="ECO:0007669"/>
    <property type="project" value="UniProtKB-SubCell"/>
</dbReference>
<dbReference type="GO" id="GO:0002161">
    <property type="term" value="F:aminoacyl-tRNA deacylase activity"/>
    <property type="evidence" value="ECO:0007669"/>
    <property type="project" value="InterPro"/>
</dbReference>
<dbReference type="GO" id="GO:0005524">
    <property type="term" value="F:ATP binding"/>
    <property type="evidence" value="ECO:0007669"/>
    <property type="project" value="UniProtKB-UniRule"/>
</dbReference>
<dbReference type="GO" id="GO:0004822">
    <property type="term" value="F:isoleucine-tRNA ligase activity"/>
    <property type="evidence" value="ECO:0007669"/>
    <property type="project" value="UniProtKB-UniRule"/>
</dbReference>
<dbReference type="GO" id="GO:0000049">
    <property type="term" value="F:tRNA binding"/>
    <property type="evidence" value="ECO:0007669"/>
    <property type="project" value="InterPro"/>
</dbReference>
<dbReference type="GO" id="GO:0008270">
    <property type="term" value="F:zinc ion binding"/>
    <property type="evidence" value="ECO:0007669"/>
    <property type="project" value="UniProtKB-UniRule"/>
</dbReference>
<dbReference type="GO" id="GO:0006428">
    <property type="term" value="P:isoleucyl-tRNA aminoacylation"/>
    <property type="evidence" value="ECO:0007669"/>
    <property type="project" value="UniProtKB-UniRule"/>
</dbReference>
<dbReference type="CDD" id="cd07961">
    <property type="entry name" value="Anticodon_Ia_Ile_ABEc"/>
    <property type="match status" value="1"/>
</dbReference>
<dbReference type="CDD" id="cd00818">
    <property type="entry name" value="IleRS_core"/>
    <property type="match status" value="1"/>
</dbReference>
<dbReference type="FunFam" id="3.40.50.620:FF:000241">
    <property type="entry name" value="Isoleucine--tRNA ligase"/>
    <property type="match status" value="1"/>
</dbReference>
<dbReference type="FunFam" id="3.40.50.620:FF:000133">
    <property type="entry name" value="Isoleucyl-tRNA synthetase, cytoplasmic"/>
    <property type="match status" value="1"/>
</dbReference>
<dbReference type="Gene3D" id="3.40.50.620">
    <property type="entry name" value="HUPs"/>
    <property type="match status" value="2"/>
</dbReference>
<dbReference type="Gene3D" id="1.10.730.10">
    <property type="entry name" value="Isoleucyl-tRNA Synthetase, Domain 1"/>
    <property type="match status" value="1"/>
</dbReference>
<dbReference type="HAMAP" id="MF_02003">
    <property type="entry name" value="Ile_tRNA_synth_type2"/>
    <property type="match status" value="1"/>
</dbReference>
<dbReference type="InterPro" id="IPR001412">
    <property type="entry name" value="aa-tRNA-synth_I_CS"/>
</dbReference>
<dbReference type="InterPro" id="IPR002300">
    <property type="entry name" value="aa-tRNA-synth_Ia"/>
</dbReference>
<dbReference type="InterPro" id="IPR033709">
    <property type="entry name" value="Anticodon_Ile_ABEc"/>
</dbReference>
<dbReference type="InterPro" id="IPR002301">
    <property type="entry name" value="Ile-tRNA-ligase"/>
</dbReference>
<dbReference type="InterPro" id="IPR023586">
    <property type="entry name" value="Ile-tRNA-ligase_type2"/>
</dbReference>
<dbReference type="InterPro" id="IPR013155">
    <property type="entry name" value="M/V/L/I-tRNA-synth_anticd-bd"/>
</dbReference>
<dbReference type="InterPro" id="IPR014729">
    <property type="entry name" value="Rossmann-like_a/b/a_fold"/>
</dbReference>
<dbReference type="InterPro" id="IPR009080">
    <property type="entry name" value="tRNAsynth_Ia_anticodon-bd"/>
</dbReference>
<dbReference type="InterPro" id="IPR009008">
    <property type="entry name" value="Val/Leu/Ile-tRNA-synth_edit"/>
</dbReference>
<dbReference type="NCBIfam" id="TIGR00392">
    <property type="entry name" value="ileS"/>
    <property type="match status" value="1"/>
</dbReference>
<dbReference type="PANTHER" id="PTHR42780:SF1">
    <property type="entry name" value="ISOLEUCINE--TRNA LIGASE, CYTOPLASMIC"/>
    <property type="match status" value="1"/>
</dbReference>
<dbReference type="PANTHER" id="PTHR42780">
    <property type="entry name" value="SOLEUCYL-TRNA SYNTHETASE"/>
    <property type="match status" value="1"/>
</dbReference>
<dbReference type="Pfam" id="PF08264">
    <property type="entry name" value="Anticodon_1"/>
    <property type="match status" value="1"/>
</dbReference>
<dbReference type="Pfam" id="PF19302">
    <property type="entry name" value="DUF5915"/>
    <property type="match status" value="1"/>
</dbReference>
<dbReference type="Pfam" id="PF00133">
    <property type="entry name" value="tRNA-synt_1"/>
    <property type="match status" value="1"/>
</dbReference>
<dbReference type="PRINTS" id="PR00984">
    <property type="entry name" value="TRNASYNTHILE"/>
</dbReference>
<dbReference type="SUPFAM" id="SSF47323">
    <property type="entry name" value="Anticodon-binding domain of a subclass of class I aminoacyl-tRNA synthetases"/>
    <property type="match status" value="1"/>
</dbReference>
<dbReference type="SUPFAM" id="SSF52374">
    <property type="entry name" value="Nucleotidylyl transferase"/>
    <property type="match status" value="1"/>
</dbReference>
<dbReference type="SUPFAM" id="SSF50677">
    <property type="entry name" value="ValRS/IleRS/LeuRS editing domain"/>
    <property type="match status" value="1"/>
</dbReference>
<dbReference type="PROSITE" id="PS00178">
    <property type="entry name" value="AA_TRNA_LIGASE_I"/>
    <property type="match status" value="1"/>
</dbReference>
<evidence type="ECO:0000255" key="1">
    <source>
        <dbReference type="HAMAP-Rule" id="MF_02003"/>
    </source>
</evidence>
<feature type="chain" id="PRO_0000098553" description="Isoleucine--tRNA ligase">
    <location>
        <begin position="1"/>
        <end position="1038"/>
    </location>
</feature>
<feature type="short sequence motif" description="'HIGH' region">
    <location>
        <begin position="47"/>
        <end position="57"/>
    </location>
</feature>
<feature type="short sequence motif" description="'KMSKS' region">
    <location>
        <begin position="591"/>
        <end position="595"/>
    </location>
</feature>
<feature type="binding site" evidence="1">
    <location>
        <position position="594"/>
    </location>
    <ligand>
        <name>ATP</name>
        <dbReference type="ChEBI" id="CHEBI:30616"/>
    </ligand>
</feature>
<keyword id="KW-0030">Aminoacyl-tRNA synthetase</keyword>
<keyword id="KW-0067">ATP-binding</keyword>
<keyword id="KW-0963">Cytoplasm</keyword>
<keyword id="KW-0436">Ligase</keyword>
<keyword id="KW-0479">Metal-binding</keyword>
<keyword id="KW-0547">Nucleotide-binding</keyword>
<keyword id="KW-0648">Protein biosynthesis</keyword>
<keyword id="KW-1185">Reference proteome</keyword>
<keyword id="KW-0862">Zinc</keyword>
<comment type="function">
    <text evidence="1">Catalyzes the attachment of isoleucine to tRNA(Ile). As IleRS can inadvertently accommodate and process structurally similar amino acids such as valine, to avoid such errors it has two additional distinct tRNA(Ile)-dependent editing activities. One activity is designated as 'pretransfer' editing and involves the hydrolysis of activated Val-AMP. The other activity is designated 'posttransfer' editing and involves deacylation of mischarged Val-tRNA(Ile).</text>
</comment>
<comment type="catalytic activity">
    <reaction evidence="1">
        <text>tRNA(Ile) + L-isoleucine + ATP = L-isoleucyl-tRNA(Ile) + AMP + diphosphate</text>
        <dbReference type="Rhea" id="RHEA:11060"/>
        <dbReference type="Rhea" id="RHEA-COMP:9666"/>
        <dbReference type="Rhea" id="RHEA-COMP:9695"/>
        <dbReference type="ChEBI" id="CHEBI:30616"/>
        <dbReference type="ChEBI" id="CHEBI:33019"/>
        <dbReference type="ChEBI" id="CHEBI:58045"/>
        <dbReference type="ChEBI" id="CHEBI:78442"/>
        <dbReference type="ChEBI" id="CHEBI:78528"/>
        <dbReference type="ChEBI" id="CHEBI:456215"/>
        <dbReference type="EC" id="6.1.1.5"/>
    </reaction>
</comment>
<comment type="cofactor">
    <cofactor evidence="1">
        <name>Zn(2+)</name>
        <dbReference type="ChEBI" id="CHEBI:29105"/>
    </cofactor>
</comment>
<comment type="subunit">
    <text evidence="1">Monomer.</text>
</comment>
<comment type="subcellular location">
    <subcellularLocation>
        <location evidence="1">Cytoplasm</location>
    </subcellularLocation>
</comment>
<comment type="domain">
    <text evidence="1">IleRS has two distinct active sites: one for aminoacylation and one for editing. The misactivated valine is translocated from the active site to the editing site, which sterically excludes the correctly activated isoleucine. The single editing site contains two valyl binding pockets, one specific for each substrate (Val-AMP or Val-tRNA(Ile)).</text>
</comment>
<comment type="similarity">
    <text evidence="1">Belongs to the class-I aminoacyl-tRNA synthetase family. IleS type 2 subfamily.</text>
</comment>
<organism>
    <name type="scientific">Protochlamydia amoebophila (strain UWE25)</name>
    <dbReference type="NCBI Taxonomy" id="264201"/>
    <lineage>
        <taxon>Bacteria</taxon>
        <taxon>Pseudomonadati</taxon>
        <taxon>Chlamydiota</taxon>
        <taxon>Chlamydiia</taxon>
        <taxon>Parachlamydiales</taxon>
        <taxon>Parachlamydiaceae</taxon>
        <taxon>Candidatus Protochlamydia</taxon>
    </lineage>
</organism>
<sequence>MFEEVLQESFDEREKKVLKFWQEGQLFERSVENRKGQPLFTFYDGPPFATGLPHYGHILAGTIKDVVLRYKTMKGFCAPRRFGWDCHGLPVENEIEKTFGLSGAKSIEEFGIAKFNEECRNIVLRYTEEWKFTVNRMGRWVDFNQTYRTMDLPFMESVWWVFKQLYAKGLVYEGLKVMPFSAKLGTPLSNFEASENYKEVDDPSLTVAFQSRDNSNTYFLAWTTTPWTLVSNLALMVSPMIEYAEVQDHVSKRNYILATERLKGYYKDSGEYTIVRKFPGSELEGQHYIPLFDYFNDRAHSGAFKIILEDSISVEEGTGIVQTAPAFGEIDFYACQKAGIDPVCPVDNNGQFTDEIPEYKGIFVKEADKDIIKRLKQQAKVIHQGTCHHRYPFCPRSDTPLIYKTVRTWFVAVEKIKDRLLAANSQIHWTPEHIQYGRFGKWLEGARDWAISRNRYWGTPIPLWRAQDGEIHVVGSIEELKQLTGNPLTDLHRHFIDEMSFEKNGKTFKRIPEVFDCWFESGSMPYAQNHYPFENRELFEQNFPADFIAEGLDQTRGWFYTLTVLSAALFDQPAMKNVIVNGLILAENGAKMSKRLKNYPDPAEVIQQYGADAIRLYMLHSPAVKADDLSFSKSGVELVLRQILLPLWNAYTFFLTYARIYNWKPGKLVQKPELAIDQWIISLLNKLVHEVEQGMDDYDLSRSVEPFVNFVDQLTNWYIRRSRRRFWDDKESPNRTQAFETLYYVLIELTKISAPYVPFISEAIYQNLRSCDMPESVHLCDFPHYQQLSRHEKLEAEMEAVQVTVSLGHALRKEHKLKVRQPLATAQLASADPKVLDFLKEQQHLISEELNVKEITFSSNEKDFVSLKAKPNFRVLGKKVGKLMKLAQLTIEQFGQKELTELLNHRSVEIILEGHPVLLTSEDVQVERIVREGIIAANQGTITIALNTNLNKELLLEGLAREIVNKVNTMRREANFAVTDRIQLYMQTTTRVIECFDQYKNYICQEVLATDVQFGPYEGTDWDLNGEPTKIIIKKSEY</sequence>
<proteinExistence type="inferred from homology"/>